<comment type="function">
    <text evidence="1">Condensation of UDP-2,3-diacylglucosamine and 2,3-diacylglucosamine-1-phosphate to form lipid A disaccharide, a precursor of lipid A, a phosphorylated glycolipid that anchors the lipopolysaccharide to the outer membrane of the cell.</text>
</comment>
<comment type="catalytic activity">
    <reaction evidence="1">
        <text>a lipid X + a UDP-2-N,3-O-bis[(3R)-3-hydroxyacyl]-alpha-D-glucosamine = a lipid A disaccharide + UDP + H(+)</text>
        <dbReference type="Rhea" id="RHEA:67828"/>
        <dbReference type="ChEBI" id="CHEBI:15378"/>
        <dbReference type="ChEBI" id="CHEBI:58223"/>
        <dbReference type="ChEBI" id="CHEBI:137748"/>
        <dbReference type="ChEBI" id="CHEBI:176338"/>
        <dbReference type="ChEBI" id="CHEBI:176343"/>
        <dbReference type="EC" id="2.4.1.182"/>
    </reaction>
</comment>
<comment type="pathway">
    <text evidence="1">Bacterial outer membrane biogenesis; LPS lipid A biosynthesis.</text>
</comment>
<comment type="similarity">
    <text evidence="1">Belongs to the LpxB family.</text>
</comment>
<evidence type="ECO:0000255" key="1">
    <source>
        <dbReference type="HAMAP-Rule" id="MF_00392"/>
    </source>
</evidence>
<gene>
    <name evidence="1" type="primary">lpxB</name>
    <name type="ordered locus">Bcen_6071</name>
</gene>
<dbReference type="EC" id="2.4.1.182" evidence="1"/>
<dbReference type="EMBL" id="CP000380">
    <property type="protein sequence ID" value="ABF80936.1"/>
    <property type="molecule type" value="Genomic_DNA"/>
</dbReference>
<dbReference type="SMR" id="Q1BHG9"/>
<dbReference type="CAZy" id="GT19">
    <property type="family name" value="Glycosyltransferase Family 19"/>
</dbReference>
<dbReference type="HOGENOM" id="CLU_036577_3_0_4"/>
<dbReference type="UniPathway" id="UPA00973"/>
<dbReference type="GO" id="GO:0016020">
    <property type="term" value="C:membrane"/>
    <property type="evidence" value="ECO:0007669"/>
    <property type="project" value="GOC"/>
</dbReference>
<dbReference type="GO" id="GO:0008915">
    <property type="term" value="F:lipid-A-disaccharide synthase activity"/>
    <property type="evidence" value="ECO:0007669"/>
    <property type="project" value="UniProtKB-UniRule"/>
</dbReference>
<dbReference type="GO" id="GO:0005543">
    <property type="term" value="F:phospholipid binding"/>
    <property type="evidence" value="ECO:0007669"/>
    <property type="project" value="TreeGrafter"/>
</dbReference>
<dbReference type="GO" id="GO:0009245">
    <property type="term" value="P:lipid A biosynthetic process"/>
    <property type="evidence" value="ECO:0007669"/>
    <property type="project" value="UniProtKB-UniRule"/>
</dbReference>
<dbReference type="HAMAP" id="MF_00392">
    <property type="entry name" value="LpxB"/>
    <property type="match status" value="1"/>
</dbReference>
<dbReference type="InterPro" id="IPR003835">
    <property type="entry name" value="Glyco_trans_19"/>
</dbReference>
<dbReference type="NCBIfam" id="TIGR00215">
    <property type="entry name" value="lpxB"/>
    <property type="match status" value="1"/>
</dbReference>
<dbReference type="PANTHER" id="PTHR30372">
    <property type="entry name" value="LIPID-A-DISACCHARIDE SYNTHASE"/>
    <property type="match status" value="1"/>
</dbReference>
<dbReference type="PANTHER" id="PTHR30372:SF4">
    <property type="entry name" value="LIPID-A-DISACCHARIDE SYNTHASE, MITOCHONDRIAL-RELATED"/>
    <property type="match status" value="1"/>
</dbReference>
<dbReference type="Pfam" id="PF02684">
    <property type="entry name" value="LpxB"/>
    <property type="match status" value="1"/>
</dbReference>
<dbReference type="SUPFAM" id="SSF53756">
    <property type="entry name" value="UDP-Glycosyltransferase/glycogen phosphorylase"/>
    <property type="match status" value="1"/>
</dbReference>
<name>LPXB_BURO1</name>
<sequence length="389" mass="42259">MPLPTNQLRLAMVAGEPSGDLLAASLLGGLRERLPESAQYYGIGGQRMIAQGFDSHWQMDKLTVRGYVEALGQIPEILRIRGELKRQLLAERPAAFIGVDAPDFNFNVEQAARDAGIPSIHFVCPSIWAWRGGRIKKIAKSVDHMLCLFPFEPAILDKAGVASTYVGHPLADDIPLEPDTHGARIALGLPADGPVIAVLPGSRRSEIALIGPTFFAAMALMQQREPGVRFVMPAATPALRELLQPLVDAHPQLALTITDGRSQVAMTAADAILVKSGTVTLEAALLKKPMVISYKVPWLTGQIMRRQGYLPYVGLPNILAGRFVVPELLQHFATPEALADATLTQLSDDANRRTLTEVFTEMHLSLRQNTAAKAAEAVVRVLEQRKGRA</sequence>
<proteinExistence type="inferred from homology"/>
<accession>Q1BHG9</accession>
<protein>
    <recommendedName>
        <fullName evidence="1">Lipid-A-disaccharide synthase</fullName>
        <ecNumber evidence="1">2.4.1.182</ecNumber>
    </recommendedName>
</protein>
<keyword id="KW-0328">Glycosyltransferase</keyword>
<keyword id="KW-0441">Lipid A biosynthesis</keyword>
<keyword id="KW-0444">Lipid biosynthesis</keyword>
<keyword id="KW-0443">Lipid metabolism</keyword>
<keyword id="KW-0808">Transferase</keyword>
<reference key="1">
    <citation type="submission" date="2006-05" db="EMBL/GenBank/DDBJ databases">
        <title>Complete sequence of chromosome 3 of Burkholderia cenocepacia AU 1054.</title>
        <authorList>
            <consortium name="US DOE Joint Genome Institute"/>
            <person name="Copeland A."/>
            <person name="Lucas S."/>
            <person name="Lapidus A."/>
            <person name="Barry K."/>
            <person name="Detter J.C."/>
            <person name="Glavina del Rio T."/>
            <person name="Hammon N."/>
            <person name="Israni S."/>
            <person name="Dalin E."/>
            <person name="Tice H."/>
            <person name="Pitluck S."/>
            <person name="Chain P."/>
            <person name="Malfatti S."/>
            <person name="Shin M."/>
            <person name="Vergez L."/>
            <person name="Schmutz J."/>
            <person name="Larimer F."/>
            <person name="Land M."/>
            <person name="Hauser L."/>
            <person name="Kyrpides N."/>
            <person name="Lykidis A."/>
            <person name="LiPuma J.J."/>
            <person name="Konstantinidis K."/>
            <person name="Tiedje J.M."/>
            <person name="Richardson P."/>
        </authorList>
    </citation>
    <scope>NUCLEOTIDE SEQUENCE [LARGE SCALE GENOMIC DNA]</scope>
    <source>
        <strain>AU 1054</strain>
    </source>
</reference>
<organism>
    <name type="scientific">Burkholderia orbicola (strain AU 1054)</name>
    <dbReference type="NCBI Taxonomy" id="331271"/>
    <lineage>
        <taxon>Bacteria</taxon>
        <taxon>Pseudomonadati</taxon>
        <taxon>Pseudomonadota</taxon>
        <taxon>Betaproteobacteria</taxon>
        <taxon>Burkholderiales</taxon>
        <taxon>Burkholderiaceae</taxon>
        <taxon>Burkholderia</taxon>
        <taxon>Burkholderia cepacia complex</taxon>
        <taxon>Burkholderia orbicola</taxon>
    </lineage>
</organism>
<feature type="chain" id="PRO_0000255163" description="Lipid-A-disaccharide synthase">
    <location>
        <begin position="1"/>
        <end position="389"/>
    </location>
</feature>